<sequence length="940" mass="105037">MRDKIVVKGAKVHNLKNVDLQIPRDKFVVFTGLSGSGKSSLAFDTLYAEGQRRYVESLSAYARQFLGQMDKPDVEYIEGLSPAISIDQKTTSKNPRSTVGTVTEIYDYLRLLYARVGKPHCPKCGKEIQQQTVDQMIDKILELPERTRIQVLAPIIKGRKGEHIKVIENIIKGGYVRARIDGEIIDLQEESVKLEKNKKHTIEAVIDRIIIKSDIRSRLADSIEIALKLSEGVVIINVIDKEDILFSENFACIDCGISIDEISPRLFSFNSPFGKCDYCDGLGTLLEIDEKLVIPNKSKSILEGGILPWANTVTNEDSWTFSILKALSKKYNFSLNTPIGELDEEIYNMLLYGIKGERIKVRYKKDGRAVDFNHTFEGLMNTLKRRYMETNSNYMKDNIENYMSDNFCPKCKGARLKPEALAVTLGEKNIFEFCKMSIREELRFLSELMLSNKNKIISNQILKEIESRLQFLIDVGLDYLDLARMAGTLSGGEAQRIRLATQIGSSLVGVLYILDEPSIGLHQRDNDRLIATLKRLRDLGNTLIVVEHDEDTMRAADYIVDIGPGAGEHGGEIVAAGDLKTVMETEGSLTGQYLVGKKKIDIPINRRKSNGKSIIVKEAKENNLKNVDVEFPLGTFTCITGVSGSGKSTLINEILYKGLNKKLNNSKEHPGLHKEILGIENIDKIINIDQSPIGRTPRSNPATYTGVFDGIREVFSNTTESKMRGYKPGRFSFNVKGGRCEACKGDGIIKIEMQFLSDVYVPCEICKGKRYNRETLEVKYKNKNISEILDMTVEESVDFFKNIPKIKNKLQTLMDVGLGYVRLGQPSTQLSGGEAQRIKLASELSKRSTGKTLYILDEPTTGLHIDDVNRLISIIQRLVDGGNTAIIIEHNLDVIKSADYIIDLGPEGGAKGGEVIGIGTPEEISVNIDSYTGHYLKKML</sequence>
<accession>Q890X9</accession>
<reference key="1">
    <citation type="journal article" date="2003" name="Proc. Natl. Acad. Sci. U.S.A.">
        <title>The genome sequence of Clostridium tetani, the causative agent of tetanus disease.</title>
        <authorList>
            <person name="Brueggemann H."/>
            <person name="Baeumer S."/>
            <person name="Fricke W.F."/>
            <person name="Wiezer A."/>
            <person name="Liesegang H."/>
            <person name="Decker I."/>
            <person name="Herzberg C."/>
            <person name="Martinez-Arias R."/>
            <person name="Merkl R."/>
            <person name="Henne A."/>
            <person name="Gottschalk G."/>
        </authorList>
    </citation>
    <scope>NUCLEOTIDE SEQUENCE [LARGE SCALE GENOMIC DNA]</scope>
    <source>
        <strain>Massachusetts / E88</strain>
    </source>
</reference>
<feature type="chain" id="PRO_0000093047" description="UvrABC system protein A">
    <location>
        <begin position="1"/>
        <end position="940"/>
    </location>
</feature>
<feature type="domain" description="ABC transporter 1" evidence="1">
    <location>
        <begin position="309"/>
        <end position="589"/>
    </location>
</feature>
<feature type="domain" description="ABC transporter 2" evidence="1">
    <location>
        <begin position="609"/>
        <end position="937"/>
    </location>
</feature>
<feature type="zinc finger region" description="C4-type" evidence="1">
    <location>
        <begin position="252"/>
        <end position="279"/>
    </location>
</feature>
<feature type="zinc finger region" description="C4-type" evidence="1">
    <location>
        <begin position="740"/>
        <end position="766"/>
    </location>
</feature>
<feature type="binding site" evidence="1">
    <location>
        <begin position="32"/>
        <end position="39"/>
    </location>
    <ligand>
        <name>ATP</name>
        <dbReference type="ChEBI" id="CHEBI:30616"/>
    </ligand>
</feature>
<feature type="binding site" evidence="1">
    <location>
        <begin position="641"/>
        <end position="648"/>
    </location>
    <ligand>
        <name>ATP</name>
        <dbReference type="ChEBI" id="CHEBI:30616"/>
    </ligand>
</feature>
<protein>
    <recommendedName>
        <fullName evidence="1">UvrABC system protein A</fullName>
        <shortName evidence="1">UvrA protein</shortName>
    </recommendedName>
    <alternativeName>
        <fullName evidence="1">Excinuclease ABC subunit A</fullName>
    </alternativeName>
</protein>
<comment type="function">
    <text evidence="1">The UvrABC repair system catalyzes the recognition and processing of DNA lesions. UvrA is an ATPase and a DNA-binding protein. A damage recognition complex composed of 2 UvrA and 2 UvrB subunits scans DNA for abnormalities. When the presence of a lesion has been verified by UvrB, the UvrA molecules dissociate.</text>
</comment>
<comment type="subunit">
    <text evidence="1">Forms a heterotetramer with UvrB during the search for lesions.</text>
</comment>
<comment type="subcellular location">
    <subcellularLocation>
        <location evidence="1">Cytoplasm</location>
    </subcellularLocation>
</comment>
<comment type="similarity">
    <text evidence="1">Belongs to the ABC transporter superfamily. UvrA family.</text>
</comment>
<comment type="sequence caution" evidence="2">
    <conflict type="erroneous initiation">
        <sequence resource="EMBL-CDS" id="AAO36966"/>
    </conflict>
</comment>
<name>UVRA_CLOTE</name>
<gene>
    <name evidence="1" type="primary">uvrA</name>
    <name type="ordered locus">CTC_02503</name>
</gene>
<proteinExistence type="inferred from homology"/>
<dbReference type="EMBL" id="AE015927">
    <property type="protein sequence ID" value="AAO36966.1"/>
    <property type="status" value="ALT_INIT"/>
    <property type="molecule type" value="Genomic_DNA"/>
</dbReference>
<dbReference type="RefSeq" id="WP_035124811.1">
    <property type="nucleotide sequence ID" value="NC_004557.1"/>
</dbReference>
<dbReference type="SMR" id="Q890X9"/>
<dbReference type="STRING" id="212717.CTC_02503"/>
<dbReference type="GeneID" id="24253654"/>
<dbReference type="KEGG" id="ctc:CTC_02503"/>
<dbReference type="HOGENOM" id="CLU_001370_0_2_9"/>
<dbReference type="OrthoDB" id="9809851at2"/>
<dbReference type="Proteomes" id="UP000001412">
    <property type="component" value="Chromosome"/>
</dbReference>
<dbReference type="GO" id="GO:0005737">
    <property type="term" value="C:cytoplasm"/>
    <property type="evidence" value="ECO:0007669"/>
    <property type="project" value="UniProtKB-SubCell"/>
</dbReference>
<dbReference type="GO" id="GO:0009380">
    <property type="term" value="C:excinuclease repair complex"/>
    <property type="evidence" value="ECO:0007669"/>
    <property type="project" value="InterPro"/>
</dbReference>
<dbReference type="GO" id="GO:0005524">
    <property type="term" value="F:ATP binding"/>
    <property type="evidence" value="ECO:0007669"/>
    <property type="project" value="UniProtKB-UniRule"/>
</dbReference>
<dbReference type="GO" id="GO:0016887">
    <property type="term" value="F:ATP hydrolysis activity"/>
    <property type="evidence" value="ECO:0007669"/>
    <property type="project" value="InterPro"/>
</dbReference>
<dbReference type="GO" id="GO:0003677">
    <property type="term" value="F:DNA binding"/>
    <property type="evidence" value="ECO:0007669"/>
    <property type="project" value="UniProtKB-UniRule"/>
</dbReference>
<dbReference type="GO" id="GO:0009381">
    <property type="term" value="F:excinuclease ABC activity"/>
    <property type="evidence" value="ECO:0007669"/>
    <property type="project" value="UniProtKB-UniRule"/>
</dbReference>
<dbReference type="GO" id="GO:0008270">
    <property type="term" value="F:zinc ion binding"/>
    <property type="evidence" value="ECO:0007669"/>
    <property type="project" value="UniProtKB-UniRule"/>
</dbReference>
<dbReference type="GO" id="GO:0006289">
    <property type="term" value="P:nucleotide-excision repair"/>
    <property type="evidence" value="ECO:0007669"/>
    <property type="project" value="UniProtKB-UniRule"/>
</dbReference>
<dbReference type="GO" id="GO:0009432">
    <property type="term" value="P:SOS response"/>
    <property type="evidence" value="ECO:0007669"/>
    <property type="project" value="UniProtKB-UniRule"/>
</dbReference>
<dbReference type="CDD" id="cd03270">
    <property type="entry name" value="ABC_UvrA_I"/>
    <property type="match status" value="1"/>
</dbReference>
<dbReference type="CDD" id="cd03271">
    <property type="entry name" value="ABC_UvrA_II"/>
    <property type="match status" value="1"/>
</dbReference>
<dbReference type="FunFam" id="1.20.1580.10:FF:000002">
    <property type="entry name" value="UvrABC system protein A"/>
    <property type="match status" value="1"/>
</dbReference>
<dbReference type="Gene3D" id="1.10.8.280">
    <property type="entry name" value="ABC transporter ATPase domain-like"/>
    <property type="match status" value="1"/>
</dbReference>
<dbReference type="Gene3D" id="1.20.1580.10">
    <property type="entry name" value="ABC transporter ATPase like domain"/>
    <property type="match status" value="2"/>
</dbReference>
<dbReference type="Gene3D" id="3.30.1490.20">
    <property type="entry name" value="ATP-grasp fold, A domain"/>
    <property type="match status" value="1"/>
</dbReference>
<dbReference type="Gene3D" id="3.40.50.300">
    <property type="entry name" value="P-loop containing nucleotide triphosphate hydrolases"/>
    <property type="match status" value="2"/>
</dbReference>
<dbReference type="HAMAP" id="MF_00205">
    <property type="entry name" value="UvrA"/>
    <property type="match status" value="1"/>
</dbReference>
<dbReference type="InterPro" id="IPR003439">
    <property type="entry name" value="ABC_transporter-like_ATP-bd"/>
</dbReference>
<dbReference type="InterPro" id="IPR017871">
    <property type="entry name" value="ABC_transporter-like_CS"/>
</dbReference>
<dbReference type="InterPro" id="IPR013815">
    <property type="entry name" value="ATP_grasp_subdomain_1"/>
</dbReference>
<dbReference type="InterPro" id="IPR027417">
    <property type="entry name" value="P-loop_NTPase"/>
</dbReference>
<dbReference type="InterPro" id="IPR004602">
    <property type="entry name" value="UvrA"/>
</dbReference>
<dbReference type="InterPro" id="IPR041552">
    <property type="entry name" value="UvrA_DNA-bd"/>
</dbReference>
<dbReference type="InterPro" id="IPR041102">
    <property type="entry name" value="UvrA_inter"/>
</dbReference>
<dbReference type="NCBIfam" id="NF001503">
    <property type="entry name" value="PRK00349.1"/>
    <property type="match status" value="1"/>
</dbReference>
<dbReference type="NCBIfam" id="TIGR00630">
    <property type="entry name" value="uvra"/>
    <property type="match status" value="1"/>
</dbReference>
<dbReference type="PANTHER" id="PTHR43152">
    <property type="entry name" value="UVRABC SYSTEM PROTEIN A"/>
    <property type="match status" value="1"/>
</dbReference>
<dbReference type="PANTHER" id="PTHR43152:SF3">
    <property type="entry name" value="UVRABC SYSTEM PROTEIN A"/>
    <property type="match status" value="1"/>
</dbReference>
<dbReference type="Pfam" id="PF17755">
    <property type="entry name" value="UvrA_DNA-bind"/>
    <property type="match status" value="1"/>
</dbReference>
<dbReference type="Pfam" id="PF17760">
    <property type="entry name" value="UvrA_inter"/>
    <property type="match status" value="1"/>
</dbReference>
<dbReference type="SUPFAM" id="SSF52540">
    <property type="entry name" value="P-loop containing nucleoside triphosphate hydrolases"/>
    <property type="match status" value="2"/>
</dbReference>
<dbReference type="PROSITE" id="PS00211">
    <property type="entry name" value="ABC_TRANSPORTER_1"/>
    <property type="match status" value="2"/>
</dbReference>
<dbReference type="PROSITE" id="PS50893">
    <property type="entry name" value="ABC_TRANSPORTER_2"/>
    <property type="match status" value="1"/>
</dbReference>
<keyword id="KW-0067">ATP-binding</keyword>
<keyword id="KW-0963">Cytoplasm</keyword>
<keyword id="KW-0227">DNA damage</keyword>
<keyword id="KW-0228">DNA excision</keyword>
<keyword id="KW-0234">DNA repair</keyword>
<keyword id="KW-0238">DNA-binding</keyword>
<keyword id="KW-0267">Excision nuclease</keyword>
<keyword id="KW-0479">Metal-binding</keyword>
<keyword id="KW-0547">Nucleotide-binding</keyword>
<keyword id="KW-1185">Reference proteome</keyword>
<keyword id="KW-0677">Repeat</keyword>
<keyword id="KW-0742">SOS response</keyword>
<keyword id="KW-0862">Zinc</keyword>
<keyword id="KW-0863">Zinc-finger</keyword>
<organism>
    <name type="scientific">Clostridium tetani (strain Massachusetts / E88)</name>
    <dbReference type="NCBI Taxonomy" id="212717"/>
    <lineage>
        <taxon>Bacteria</taxon>
        <taxon>Bacillati</taxon>
        <taxon>Bacillota</taxon>
        <taxon>Clostridia</taxon>
        <taxon>Eubacteriales</taxon>
        <taxon>Clostridiaceae</taxon>
        <taxon>Clostridium</taxon>
    </lineage>
</organism>
<evidence type="ECO:0000255" key="1">
    <source>
        <dbReference type="HAMAP-Rule" id="MF_00205"/>
    </source>
</evidence>
<evidence type="ECO:0000305" key="2"/>